<proteinExistence type="evidence at protein level"/>
<organism>
    <name type="scientific">Arabidopsis thaliana</name>
    <name type="common">Mouse-ear cress</name>
    <dbReference type="NCBI Taxonomy" id="3702"/>
    <lineage>
        <taxon>Eukaryota</taxon>
        <taxon>Viridiplantae</taxon>
        <taxon>Streptophyta</taxon>
        <taxon>Embryophyta</taxon>
        <taxon>Tracheophyta</taxon>
        <taxon>Spermatophyta</taxon>
        <taxon>Magnoliopsida</taxon>
        <taxon>eudicotyledons</taxon>
        <taxon>Gunneridae</taxon>
        <taxon>Pentapetalae</taxon>
        <taxon>rosids</taxon>
        <taxon>malvids</taxon>
        <taxon>Brassicales</taxon>
        <taxon>Brassicaceae</taxon>
        <taxon>Camelineae</taxon>
        <taxon>Arabidopsis</taxon>
    </lineage>
</organism>
<comment type="function">
    <text evidence="4">DNA-dependent RNA polymerase catalyzes the transcription of DNA into RNA using the four ribonucleoside triphosphates as substrates. Component of RNA polymerases IV and V which mediate short-interfering RNAs (siRNA) accumulation and subsequent RNA-directed DNA methylation-dependent (RdDM) transcriptional gene silencing (TGS) of endogenous repeated sequences, including transposable elements.</text>
</comment>
<comment type="subunit">
    <text evidence="3 4 5 6 7">Component of the RNA polymerase IV and V complexes. Interacts with NRPB11, SHH1, GRP23 and NRPD1.</text>
</comment>
<comment type="interaction">
    <interactant intactId="EBI-1769627">
        <id>Q39212</id>
    </interactant>
    <interactant intactId="EBI-1769617">
        <id>Q9SY69</id>
        <label>GRP23</label>
    </interactant>
    <organismsDiffer>false</organismsDiffer>
    <experiments>3</experiments>
</comment>
<comment type="subcellular location">
    <subcellularLocation>
        <location evidence="1">Nucleus</location>
    </subcellularLocation>
</comment>
<comment type="alternative products">
    <event type="alternative splicing"/>
    <isoform>
        <id>Q39212-1</id>
        <name>1</name>
        <sequence type="displayed"/>
    </isoform>
    <text>A number of isoforms are produced. According to EST sequences.</text>
</comment>
<comment type="similarity">
    <text evidence="8">Belongs to the archaeal Rpo3/eukaryotic RPB3 RNA polymerase subunit family.</text>
</comment>
<keyword id="KW-0002">3D-structure</keyword>
<keyword id="KW-0007">Acetylation</keyword>
<keyword id="KW-0025">Alternative splicing</keyword>
<keyword id="KW-0240">DNA-directed RNA polymerase</keyword>
<keyword id="KW-0539">Nucleus</keyword>
<keyword id="KW-1185">Reference proteome</keyword>
<keyword id="KW-0804">Transcription</keyword>
<accession>Q39212</accession>
<accession>Q9SJP1</accession>
<reference key="1">
    <citation type="journal article" date="1996" name="J. Biol. Chem.">
        <title>Association between 36- and 13.6-kDa alpha-like subunits of Arabidopsis thaliana RNA polymerase II.</title>
        <authorList>
            <person name="Ulmasov T."/>
            <person name="Larkin R.M."/>
            <person name="Guilfoyle T.J."/>
        </authorList>
    </citation>
    <scope>NUCLEOTIDE SEQUENCE [GENOMIC DNA]</scope>
    <scope>INTERACTION WITH NRPB11</scope>
    <source>
        <strain>cv. Columbia</strain>
    </source>
</reference>
<reference key="2">
    <citation type="journal article" date="1999" name="Nature">
        <title>Sequence and analysis of chromosome 2 of the plant Arabidopsis thaliana.</title>
        <authorList>
            <person name="Lin X."/>
            <person name="Kaul S."/>
            <person name="Rounsley S.D."/>
            <person name="Shea T.P."/>
            <person name="Benito M.-I."/>
            <person name="Town C.D."/>
            <person name="Fujii C.Y."/>
            <person name="Mason T.M."/>
            <person name="Bowman C.L."/>
            <person name="Barnstead M.E."/>
            <person name="Feldblyum T.V."/>
            <person name="Buell C.R."/>
            <person name="Ketchum K.A."/>
            <person name="Lee J.J."/>
            <person name="Ronning C.M."/>
            <person name="Koo H.L."/>
            <person name="Moffat K.S."/>
            <person name="Cronin L.A."/>
            <person name="Shen M."/>
            <person name="Pai G."/>
            <person name="Van Aken S."/>
            <person name="Umayam L."/>
            <person name="Tallon L.J."/>
            <person name="Gill J.E."/>
            <person name="Adams M.D."/>
            <person name="Carrera A.J."/>
            <person name="Creasy T.H."/>
            <person name="Goodman H.M."/>
            <person name="Somerville C.R."/>
            <person name="Copenhaver G.P."/>
            <person name="Preuss D."/>
            <person name="Nierman W.C."/>
            <person name="White O."/>
            <person name="Eisen J.A."/>
            <person name="Salzberg S.L."/>
            <person name="Fraser C.M."/>
            <person name="Venter J.C."/>
        </authorList>
    </citation>
    <scope>NUCLEOTIDE SEQUENCE [LARGE SCALE GENOMIC DNA]</scope>
    <source>
        <strain>cv. Columbia</strain>
    </source>
</reference>
<reference key="3">
    <citation type="journal article" date="2017" name="Plant J.">
        <title>Araport11: a complete reannotation of the Arabidopsis thaliana reference genome.</title>
        <authorList>
            <person name="Cheng C.Y."/>
            <person name="Krishnakumar V."/>
            <person name="Chan A.P."/>
            <person name="Thibaud-Nissen F."/>
            <person name="Schobel S."/>
            <person name="Town C.D."/>
        </authorList>
    </citation>
    <scope>GENOME REANNOTATION</scope>
    <source>
        <strain>cv. Columbia</strain>
    </source>
</reference>
<reference key="4">
    <citation type="journal article" date="2003" name="Science">
        <title>Empirical analysis of transcriptional activity in the Arabidopsis genome.</title>
        <authorList>
            <person name="Yamada K."/>
            <person name="Lim J."/>
            <person name="Dale J.M."/>
            <person name="Chen H."/>
            <person name="Shinn P."/>
            <person name="Palm C.J."/>
            <person name="Southwick A.M."/>
            <person name="Wu H.C."/>
            <person name="Kim C.J."/>
            <person name="Nguyen M."/>
            <person name="Pham P.K."/>
            <person name="Cheuk R.F."/>
            <person name="Karlin-Newmann G."/>
            <person name="Liu S.X."/>
            <person name="Lam B."/>
            <person name="Sakano H."/>
            <person name="Wu T."/>
            <person name="Yu G."/>
            <person name="Miranda M."/>
            <person name="Quach H.L."/>
            <person name="Tripp M."/>
            <person name="Chang C.H."/>
            <person name="Lee J.M."/>
            <person name="Toriumi M.J."/>
            <person name="Chan M.M."/>
            <person name="Tang C.C."/>
            <person name="Onodera C.S."/>
            <person name="Deng J.M."/>
            <person name="Akiyama K."/>
            <person name="Ansari Y."/>
            <person name="Arakawa T."/>
            <person name="Banh J."/>
            <person name="Banno F."/>
            <person name="Bowser L."/>
            <person name="Brooks S.Y."/>
            <person name="Carninci P."/>
            <person name="Chao Q."/>
            <person name="Choy N."/>
            <person name="Enju A."/>
            <person name="Goldsmith A.D."/>
            <person name="Gurjal M."/>
            <person name="Hansen N.F."/>
            <person name="Hayashizaki Y."/>
            <person name="Johnson-Hopson C."/>
            <person name="Hsuan V.W."/>
            <person name="Iida K."/>
            <person name="Karnes M."/>
            <person name="Khan S."/>
            <person name="Koesema E."/>
            <person name="Ishida J."/>
            <person name="Jiang P.X."/>
            <person name="Jones T."/>
            <person name="Kawai J."/>
            <person name="Kamiya A."/>
            <person name="Meyers C."/>
            <person name="Nakajima M."/>
            <person name="Narusaka M."/>
            <person name="Seki M."/>
            <person name="Sakurai T."/>
            <person name="Satou M."/>
            <person name="Tamse R."/>
            <person name="Vaysberg M."/>
            <person name="Wallender E.K."/>
            <person name="Wong C."/>
            <person name="Yamamura Y."/>
            <person name="Yuan S."/>
            <person name="Shinozaki K."/>
            <person name="Davis R.W."/>
            <person name="Theologis A."/>
            <person name="Ecker J.R."/>
        </authorList>
    </citation>
    <scope>NUCLEOTIDE SEQUENCE [LARGE SCALE MRNA]</scope>
    <source>
        <strain>cv. Columbia</strain>
    </source>
</reference>
<reference key="5">
    <citation type="journal article" date="2006" name="Plant Cell">
        <title>Arabidopsis GLUTAMINE-RICH PROTEIN23 is essential for early embryogenesis and encodes a novel nuclear PPR motif protein that interacts with RNA polymerase II subunit III.</title>
        <authorList>
            <person name="Ding Y.-H."/>
            <person name="Liu N.-Y."/>
            <person name="Tang Z.-S."/>
            <person name="Liu J."/>
            <person name="Yang W.-C."/>
        </authorList>
    </citation>
    <scope>INTERACTION WITH GRP23</scope>
</reference>
<reference key="6">
    <citation type="journal article" date="2009" name="Mol. Cell">
        <title>Subunit compositions of the RNA-silencing enzymes Pol IV and Pol V reveal their origins as specialized forms of RNA polymerase II.</title>
        <authorList>
            <person name="Ream T.S."/>
            <person name="Haag J.R."/>
            <person name="Wierzbicki A.T."/>
            <person name="Nicora C.D."/>
            <person name="Norbeck A.D."/>
            <person name="Zhu J.K."/>
            <person name="Hagen G."/>
            <person name="Guilfoyle T.J."/>
            <person name="Pasa-Tolic L."/>
            <person name="Pikaard C.S."/>
        </authorList>
    </citation>
    <scope>FUNCTION</scope>
    <scope>IDENTIFICATION BY MASS SPECTROMETRY</scope>
    <scope>SUBUNIT</scope>
    <scope>NOMENCLATURE</scope>
</reference>
<reference key="7">
    <citation type="journal article" date="2011" name="PLoS Genet.">
        <title>SHH1, a homeodomain protein required for DNA methylation, as well as RDR2, RDM4, and chromatin remodeling factors, associate with RNA polymerase IV.</title>
        <authorList>
            <person name="Law J.A."/>
            <person name="Vashisht A.A."/>
            <person name="Wohlschlegel J.A."/>
            <person name="Jacobsen S.E."/>
        </authorList>
    </citation>
    <scope>IDENTIFICATION BY MASS SPECTROMETRY</scope>
    <scope>INTERACTION WITH NRPD1</scope>
    <scope>SUBUNIT</scope>
</reference>
<reference key="8">
    <citation type="journal article" date="2013" name="Proc. Natl. Acad. Sci. U.S.A.">
        <title>DTF1 is a core component of RNA-directed DNA methylation and may assist in the recruitment of Pol IV.</title>
        <authorList>
            <person name="Zhang H."/>
            <person name="Ma Z.Y."/>
            <person name="Zeng L."/>
            <person name="Tanaka K."/>
            <person name="Zhang C.J."/>
            <person name="Ma J."/>
            <person name="Bai G."/>
            <person name="Wang P."/>
            <person name="Zhang S.W."/>
            <person name="Liu Z.W."/>
            <person name="Cai T."/>
            <person name="Tang K."/>
            <person name="Liu R."/>
            <person name="Shi X."/>
            <person name="He X.J."/>
            <person name="Zhu J.K."/>
        </authorList>
    </citation>
    <scope>IDENTIFICATION BY MASS SPECTROMETRY</scope>
    <scope>INTERACTION WITH SHH1</scope>
</reference>
<name>RPD3B_ARATH</name>
<sequence length="319" mass="35575">MDGVTYQRFPTVKIRELKDDYAKFELRETDVSMANALRRVMISEVPTMAIHLVKIEVNSSVLNDEFIAQRLSLIPLTSERAMSMRFCQDCEDCNGDEHCEFCSVEFPLSAKCVTDQTLDVTSRDLYSADPTVTPVDFTSNSSTSDSSEHKGIIIAKLRRGQELKLKALARKGIGKDHAKWSPAATVTYMYEPDIIINEEMMNTLTDEEKIDLIESSPTKVFGIDPVTGQVVVVDPEAYTYDEEVIKKAEAMGKPGLIEIHPKHDSFVFTVESTGALKASQLVLNAIDILKQKLDAIRLSDNTVEADDQFGELGAHMREG</sequence>
<dbReference type="EMBL" id="L34771">
    <property type="protein sequence ID" value="AAB03740.1"/>
    <property type="molecule type" value="Genomic_DNA"/>
</dbReference>
<dbReference type="EMBL" id="AC006920">
    <property type="protein sequence ID" value="AAD22284.1"/>
    <property type="molecule type" value="Genomic_DNA"/>
</dbReference>
<dbReference type="EMBL" id="CP002685">
    <property type="protein sequence ID" value="AEC06397.1"/>
    <property type="molecule type" value="Genomic_DNA"/>
</dbReference>
<dbReference type="EMBL" id="BT005715">
    <property type="protein sequence ID" value="AAO64135.1"/>
    <property type="molecule type" value="mRNA"/>
</dbReference>
<dbReference type="EMBL" id="BT006072">
    <property type="protein sequence ID" value="AAP04057.1"/>
    <property type="molecule type" value="mRNA"/>
</dbReference>
<dbReference type="PIR" id="E84528">
    <property type="entry name" value="E84528"/>
</dbReference>
<dbReference type="PIR" id="S71177">
    <property type="entry name" value="S71177"/>
</dbReference>
<dbReference type="RefSeq" id="NP_179142.1">
    <molecule id="Q39212-1"/>
    <property type="nucleotide sequence ID" value="NM_127100.4"/>
</dbReference>
<dbReference type="PDB" id="8HYJ">
    <property type="method" value="EM"/>
    <property type="resolution" value="4.30 A"/>
    <property type="chains" value="C=1-319"/>
</dbReference>
<dbReference type="PDBsum" id="8HYJ"/>
<dbReference type="EMDB" id="EMD-35086"/>
<dbReference type="SMR" id="Q39212"/>
<dbReference type="BioGRID" id="1391">
    <property type="interactions" value="81"/>
</dbReference>
<dbReference type="FunCoup" id="Q39212">
    <property type="interactions" value="3604"/>
</dbReference>
<dbReference type="IntAct" id="Q39212">
    <property type="interactions" value="3"/>
</dbReference>
<dbReference type="STRING" id="3702.Q39212"/>
<dbReference type="PaxDb" id="3702-AT2G15400.1"/>
<dbReference type="ProteomicsDB" id="228231">
    <molecule id="Q39212-1"/>
</dbReference>
<dbReference type="EnsemblPlants" id="AT2G15400.1">
    <molecule id="Q39212-1"/>
    <property type="protein sequence ID" value="AT2G15400.1"/>
    <property type="gene ID" value="AT2G15400"/>
</dbReference>
<dbReference type="GeneID" id="816032"/>
<dbReference type="Gramene" id="AT2G15400.1">
    <molecule id="Q39212-1"/>
    <property type="protein sequence ID" value="AT2G15400.1"/>
    <property type="gene ID" value="AT2G15400"/>
</dbReference>
<dbReference type="KEGG" id="ath:AT2G15400"/>
<dbReference type="Araport" id="AT2G15400"/>
<dbReference type="TAIR" id="AT2G15400">
    <property type="gene designation" value="NRPE3B"/>
</dbReference>
<dbReference type="eggNOG" id="KOG1522">
    <property type="taxonomic scope" value="Eukaryota"/>
</dbReference>
<dbReference type="HOGENOM" id="CLU_038421_3_0_1"/>
<dbReference type="InParanoid" id="Q39212"/>
<dbReference type="OMA" id="HDSFVFT"/>
<dbReference type="PhylomeDB" id="Q39212"/>
<dbReference type="CD-CODE" id="4299E36E">
    <property type="entry name" value="Nucleolus"/>
</dbReference>
<dbReference type="PRO" id="PR:Q39212"/>
<dbReference type="Proteomes" id="UP000006548">
    <property type="component" value="Chromosome 2"/>
</dbReference>
<dbReference type="ExpressionAtlas" id="Q39212">
    <property type="expression patterns" value="baseline and differential"/>
</dbReference>
<dbReference type="GO" id="GO:0000418">
    <property type="term" value="C:RNA polymerase IV complex"/>
    <property type="evidence" value="ECO:0000314"/>
    <property type="project" value="UniProtKB"/>
</dbReference>
<dbReference type="GO" id="GO:0000419">
    <property type="term" value="C:RNA polymerase V complex"/>
    <property type="evidence" value="ECO:0000314"/>
    <property type="project" value="UniProtKB"/>
</dbReference>
<dbReference type="GO" id="GO:0003677">
    <property type="term" value="F:DNA binding"/>
    <property type="evidence" value="ECO:0007669"/>
    <property type="project" value="InterPro"/>
</dbReference>
<dbReference type="GO" id="GO:0003899">
    <property type="term" value="F:DNA-directed RNA polymerase activity"/>
    <property type="evidence" value="ECO:0007669"/>
    <property type="project" value="InterPro"/>
</dbReference>
<dbReference type="GO" id="GO:0046983">
    <property type="term" value="F:protein dimerization activity"/>
    <property type="evidence" value="ECO:0007669"/>
    <property type="project" value="InterPro"/>
</dbReference>
<dbReference type="GO" id="GO:0006351">
    <property type="term" value="P:DNA-templated transcription"/>
    <property type="evidence" value="ECO:0007669"/>
    <property type="project" value="InterPro"/>
</dbReference>
<dbReference type="CDD" id="cd07031">
    <property type="entry name" value="RNAP_II_RPB3"/>
    <property type="match status" value="1"/>
</dbReference>
<dbReference type="FunFam" id="2.170.120.12:FF:000005">
    <property type="entry name" value="DNA-directed RNA polymerase family protein"/>
    <property type="match status" value="1"/>
</dbReference>
<dbReference type="Gene3D" id="2.170.120.12">
    <property type="entry name" value="DNA-directed RNA polymerase, insert domain"/>
    <property type="match status" value="1"/>
</dbReference>
<dbReference type="Gene3D" id="3.30.1360.10">
    <property type="entry name" value="RNA polymerase, RBP11-like subunit"/>
    <property type="match status" value="1"/>
</dbReference>
<dbReference type="HAMAP" id="MF_00320">
    <property type="entry name" value="RNApol_arch_Rpo3"/>
    <property type="match status" value="1"/>
</dbReference>
<dbReference type="InterPro" id="IPR001514">
    <property type="entry name" value="DNA-dir_RNA_pol_30-40kDasu_CS"/>
</dbReference>
<dbReference type="InterPro" id="IPR011262">
    <property type="entry name" value="DNA-dir_RNA_pol_insert"/>
</dbReference>
<dbReference type="InterPro" id="IPR011263">
    <property type="entry name" value="DNA-dir_RNA_pol_RpoA/D/Rpb3"/>
</dbReference>
<dbReference type="InterPro" id="IPR036603">
    <property type="entry name" value="RBP11-like"/>
</dbReference>
<dbReference type="InterPro" id="IPR022842">
    <property type="entry name" value="RNAP_Rpo3/Rpb3/RPAC1"/>
</dbReference>
<dbReference type="InterPro" id="IPR036643">
    <property type="entry name" value="RNApol_insert_sf"/>
</dbReference>
<dbReference type="InterPro" id="IPR050518">
    <property type="entry name" value="Rpo3/RPB3_RNA_Pol_subunit"/>
</dbReference>
<dbReference type="NCBIfam" id="NF001988">
    <property type="entry name" value="PRK00783.1"/>
    <property type="match status" value="1"/>
</dbReference>
<dbReference type="PANTHER" id="PTHR11800">
    <property type="entry name" value="DNA-DIRECTED RNA POLYMERASE"/>
    <property type="match status" value="1"/>
</dbReference>
<dbReference type="PANTHER" id="PTHR11800:SF2">
    <property type="entry name" value="DNA-DIRECTED RNA POLYMERASE II SUBUNIT RPB3"/>
    <property type="match status" value="1"/>
</dbReference>
<dbReference type="Pfam" id="PF01000">
    <property type="entry name" value="RNA_pol_A_bac"/>
    <property type="match status" value="1"/>
</dbReference>
<dbReference type="Pfam" id="PF01193">
    <property type="entry name" value="RNA_pol_L"/>
    <property type="match status" value="1"/>
</dbReference>
<dbReference type="SMART" id="SM00662">
    <property type="entry name" value="RPOLD"/>
    <property type="match status" value="1"/>
</dbReference>
<dbReference type="SUPFAM" id="SSF56553">
    <property type="entry name" value="Insert subdomain of RNA polymerase alpha subunit"/>
    <property type="match status" value="1"/>
</dbReference>
<dbReference type="SUPFAM" id="SSF55257">
    <property type="entry name" value="RBP11-like subunits of RNA polymerase"/>
    <property type="match status" value="1"/>
</dbReference>
<dbReference type="PROSITE" id="PS00446">
    <property type="entry name" value="RNA_POL_D_30KD"/>
    <property type="match status" value="1"/>
</dbReference>
<protein>
    <recommendedName>
        <fullName>DNA-directed RNA polymerases IV and V subunit 3B</fullName>
    </recommendedName>
    <alternativeName>
        <fullName>DNA-directed RNA polymerase II 36 kDa polypeptide B</fullName>
    </alternativeName>
    <alternativeName>
        <fullName>DNA-directed RNA polymerase II subunit RPB3-B</fullName>
        <shortName>RNA polymerase II subunit 3-B</shortName>
        <shortName>RNA polymerase II subunit B3-B</shortName>
    </alternativeName>
</protein>
<gene>
    <name type="primary">NRPD3B</name>
    <name type="synonym">NRPE3B</name>
    <name type="synonym">RPB36B</name>
    <name type="ordered locus">At2g15400</name>
    <name type="ORF">F26H6.8</name>
</gene>
<feature type="chain" id="PRO_0000132746" description="DNA-directed RNA polymerases IV and V subunit 3B">
    <location>
        <begin position="1"/>
        <end position="319"/>
    </location>
</feature>
<feature type="modified residue" description="N-acetylmethionine" evidence="2">
    <location>
        <position position="1"/>
    </location>
</feature>
<feature type="sequence conflict" description="In Ref. 1; AAB03740." evidence="8" ref="1">
    <original>FTVE</original>
    <variation>LSVH</variation>
    <location>
        <begin position="268"/>
        <end position="271"/>
    </location>
</feature>
<evidence type="ECO:0000250" key="1"/>
<evidence type="ECO:0000250" key="2">
    <source>
        <dbReference type="UniProtKB" id="Q39211"/>
    </source>
</evidence>
<evidence type="ECO:0000269" key="3">
    <source>
    </source>
</evidence>
<evidence type="ECO:0000269" key="4">
    <source>
    </source>
</evidence>
<evidence type="ECO:0000269" key="5">
    <source>
    </source>
</evidence>
<evidence type="ECO:0000269" key="6">
    <source>
    </source>
</evidence>
<evidence type="ECO:0000269" key="7">
    <source>
    </source>
</evidence>
<evidence type="ECO:0000305" key="8"/>